<name>MAO1_ERWT9</name>
<evidence type="ECO:0000255" key="1">
    <source>
        <dbReference type="HAMAP-Rule" id="MF_01619"/>
    </source>
</evidence>
<dbReference type="EC" id="1.1.1.38" evidence="1"/>
<dbReference type="EMBL" id="CU468135">
    <property type="protein sequence ID" value="CAO96341.1"/>
    <property type="molecule type" value="Genomic_DNA"/>
</dbReference>
<dbReference type="RefSeq" id="WP_012441035.1">
    <property type="nucleotide sequence ID" value="NC_010694.1"/>
</dbReference>
<dbReference type="SMR" id="B2VIF2"/>
<dbReference type="STRING" id="465817.ETA_12950"/>
<dbReference type="KEGG" id="eta:ETA_12950"/>
<dbReference type="eggNOG" id="COG0281">
    <property type="taxonomic scope" value="Bacteria"/>
</dbReference>
<dbReference type="HOGENOM" id="CLU_011405_5_2_6"/>
<dbReference type="OrthoDB" id="3314528at2"/>
<dbReference type="Proteomes" id="UP000001726">
    <property type="component" value="Chromosome"/>
</dbReference>
<dbReference type="GO" id="GO:0005829">
    <property type="term" value="C:cytosol"/>
    <property type="evidence" value="ECO:0007669"/>
    <property type="project" value="TreeGrafter"/>
</dbReference>
<dbReference type="GO" id="GO:0004471">
    <property type="term" value="F:malate dehydrogenase (decarboxylating) (NAD+) activity"/>
    <property type="evidence" value="ECO:0007669"/>
    <property type="project" value="UniProtKB-UniRule"/>
</dbReference>
<dbReference type="GO" id="GO:0046872">
    <property type="term" value="F:metal ion binding"/>
    <property type="evidence" value="ECO:0007669"/>
    <property type="project" value="UniProtKB-KW"/>
</dbReference>
<dbReference type="GO" id="GO:0051287">
    <property type="term" value="F:NAD binding"/>
    <property type="evidence" value="ECO:0007669"/>
    <property type="project" value="InterPro"/>
</dbReference>
<dbReference type="GO" id="GO:0008948">
    <property type="term" value="F:oxaloacetate decarboxylase activity"/>
    <property type="evidence" value="ECO:0007669"/>
    <property type="project" value="UniProtKB-UniRule"/>
</dbReference>
<dbReference type="GO" id="GO:0006108">
    <property type="term" value="P:malate metabolic process"/>
    <property type="evidence" value="ECO:0007669"/>
    <property type="project" value="TreeGrafter"/>
</dbReference>
<dbReference type="CDD" id="cd05312">
    <property type="entry name" value="NAD_bind_1_malic_enz"/>
    <property type="match status" value="1"/>
</dbReference>
<dbReference type="FunFam" id="3.40.50.10380:FF:000001">
    <property type="entry name" value="NAD-dependent malic enzyme"/>
    <property type="match status" value="1"/>
</dbReference>
<dbReference type="FunFam" id="3.40.50.720:FF:000055">
    <property type="entry name" value="NAD-dependent malic enzyme"/>
    <property type="match status" value="1"/>
</dbReference>
<dbReference type="Gene3D" id="3.40.50.10380">
    <property type="entry name" value="Malic enzyme, N-terminal domain"/>
    <property type="match status" value="1"/>
</dbReference>
<dbReference type="Gene3D" id="3.40.50.720">
    <property type="entry name" value="NAD(P)-binding Rossmann-like Domain"/>
    <property type="match status" value="1"/>
</dbReference>
<dbReference type="HAMAP" id="MF_01619">
    <property type="entry name" value="NAD_malic_enz"/>
    <property type="match status" value="1"/>
</dbReference>
<dbReference type="InterPro" id="IPR046346">
    <property type="entry name" value="Aminoacid_DH-like_N_sf"/>
</dbReference>
<dbReference type="InterPro" id="IPR015884">
    <property type="entry name" value="Malic_enzyme_CS"/>
</dbReference>
<dbReference type="InterPro" id="IPR012301">
    <property type="entry name" value="Malic_N_dom"/>
</dbReference>
<dbReference type="InterPro" id="IPR037062">
    <property type="entry name" value="Malic_N_dom_sf"/>
</dbReference>
<dbReference type="InterPro" id="IPR012302">
    <property type="entry name" value="Malic_NAD-bd"/>
</dbReference>
<dbReference type="InterPro" id="IPR001891">
    <property type="entry name" value="Malic_OxRdtase"/>
</dbReference>
<dbReference type="InterPro" id="IPR036291">
    <property type="entry name" value="NAD(P)-bd_dom_sf"/>
</dbReference>
<dbReference type="InterPro" id="IPR023667">
    <property type="entry name" value="NAD_malic_enz_proteobac"/>
</dbReference>
<dbReference type="NCBIfam" id="NF010052">
    <property type="entry name" value="PRK13529.1"/>
    <property type="match status" value="1"/>
</dbReference>
<dbReference type="PANTHER" id="PTHR23406">
    <property type="entry name" value="MALIC ENZYME-RELATED"/>
    <property type="match status" value="1"/>
</dbReference>
<dbReference type="PANTHER" id="PTHR23406:SF34">
    <property type="entry name" value="NAD-DEPENDENT MALIC ENZYME, MITOCHONDRIAL"/>
    <property type="match status" value="1"/>
</dbReference>
<dbReference type="Pfam" id="PF00390">
    <property type="entry name" value="malic"/>
    <property type="match status" value="1"/>
</dbReference>
<dbReference type="Pfam" id="PF03949">
    <property type="entry name" value="Malic_M"/>
    <property type="match status" value="1"/>
</dbReference>
<dbReference type="PIRSF" id="PIRSF000106">
    <property type="entry name" value="ME"/>
    <property type="match status" value="1"/>
</dbReference>
<dbReference type="PRINTS" id="PR00072">
    <property type="entry name" value="MALOXRDTASE"/>
</dbReference>
<dbReference type="SMART" id="SM01274">
    <property type="entry name" value="malic"/>
    <property type="match status" value="1"/>
</dbReference>
<dbReference type="SMART" id="SM00919">
    <property type="entry name" value="Malic_M"/>
    <property type="match status" value="1"/>
</dbReference>
<dbReference type="SUPFAM" id="SSF53223">
    <property type="entry name" value="Aminoacid dehydrogenase-like, N-terminal domain"/>
    <property type="match status" value="1"/>
</dbReference>
<dbReference type="SUPFAM" id="SSF51735">
    <property type="entry name" value="NAD(P)-binding Rossmann-fold domains"/>
    <property type="match status" value="1"/>
</dbReference>
<dbReference type="PROSITE" id="PS00331">
    <property type="entry name" value="MALIC_ENZYMES"/>
    <property type="match status" value="1"/>
</dbReference>
<comment type="catalytic activity">
    <reaction evidence="1">
        <text>(S)-malate + NAD(+) = pyruvate + CO2 + NADH</text>
        <dbReference type="Rhea" id="RHEA:12653"/>
        <dbReference type="ChEBI" id="CHEBI:15361"/>
        <dbReference type="ChEBI" id="CHEBI:15589"/>
        <dbReference type="ChEBI" id="CHEBI:16526"/>
        <dbReference type="ChEBI" id="CHEBI:57540"/>
        <dbReference type="ChEBI" id="CHEBI:57945"/>
        <dbReference type="EC" id="1.1.1.38"/>
    </reaction>
</comment>
<comment type="catalytic activity">
    <reaction evidence="1">
        <text>oxaloacetate + H(+) = pyruvate + CO2</text>
        <dbReference type="Rhea" id="RHEA:15641"/>
        <dbReference type="ChEBI" id="CHEBI:15361"/>
        <dbReference type="ChEBI" id="CHEBI:15378"/>
        <dbReference type="ChEBI" id="CHEBI:16452"/>
        <dbReference type="ChEBI" id="CHEBI:16526"/>
        <dbReference type="EC" id="1.1.1.38"/>
    </reaction>
</comment>
<comment type="cofactor">
    <cofactor evidence="1">
        <name>Mg(2+)</name>
        <dbReference type="ChEBI" id="CHEBI:18420"/>
    </cofactor>
    <cofactor evidence="1">
        <name>Mn(2+)</name>
        <dbReference type="ChEBI" id="CHEBI:29035"/>
    </cofactor>
    <text evidence="1">Divalent metal cations. Prefers magnesium or manganese.</text>
</comment>
<comment type="subunit">
    <text evidence="1">Homotetramer.</text>
</comment>
<comment type="similarity">
    <text evidence="1">Belongs to the malic enzymes family.</text>
</comment>
<gene>
    <name evidence="1" type="primary">maeA</name>
    <name type="ordered locus">ETA_12950</name>
</gene>
<sequence length="565" mass="62309">MELEYESKRSLYIPYAGPILLEFPLLNKGSAFSIEERNDFNLNGLLPETVESIEEQAERAWRQFQDFKNNNDKHVYLRNIQDTNETLFYRLLDNHLEEMMPIIYTPTVGAACEHFSEIYRRARGLFISYPNRANIEDMLQNATKQNVKVIVVTDGERILGLGDQGIGGMGIPIGKLSLYTACGGISPAYTLPVVLDVGTNNQQLLNDPLYMGWRHPRITGEEYDNFVNEFIQAVKSRWPNVLLQFEDFAQKNAMPLLERYRDEVCCFNDDIQGTAAVTLGTLIAASRAAGGKLCEQKVVFLGAGSAGCGIAEQIIAQMKSEGLSDEEARARVFMVDRFGLLTDRLPNLLNFQSRLVQKSDSLSGWDSANDSLSLLDVVRNAKPDIMIGVSGQPGLFSEEIVREMHKHCTRPIIMPLSNPTSRVEATPQDIMAWTDGCALVATGSPFSPVSWKDKTYPIAQCNNSYIFPGIGLGVIASGASRVTDSMLMAASRALADCSPLVNDGEGPVLPEVNDIQGVSKIIAMAVGKAAQLAGVAVVTSEDVLSKAIAANFWLPQYRNYRRTSI</sequence>
<reference key="1">
    <citation type="journal article" date="2008" name="Environ. Microbiol.">
        <title>The genome of Erwinia tasmaniensis strain Et1/99, a non-pathogenic bacterium in the genus Erwinia.</title>
        <authorList>
            <person name="Kube M."/>
            <person name="Migdoll A.M."/>
            <person name="Mueller I."/>
            <person name="Kuhl H."/>
            <person name="Beck A."/>
            <person name="Reinhardt R."/>
            <person name="Geider K."/>
        </authorList>
    </citation>
    <scope>NUCLEOTIDE SEQUENCE [LARGE SCALE GENOMIC DNA]</scope>
    <source>
        <strain>DSM 17950 / CFBP 7177 / CIP 109463 / NCPPB 4357 / Et1/99</strain>
    </source>
</reference>
<accession>B2VIF2</accession>
<keyword id="KW-0479">Metal-binding</keyword>
<keyword id="KW-0520">NAD</keyword>
<keyword id="KW-0560">Oxidoreductase</keyword>
<keyword id="KW-1185">Reference proteome</keyword>
<feature type="chain" id="PRO_1000185998" description="NAD-dependent malic enzyme">
    <location>
        <begin position="1"/>
        <end position="565"/>
    </location>
</feature>
<feature type="active site" description="Proton donor" evidence="1">
    <location>
        <position position="104"/>
    </location>
</feature>
<feature type="active site" description="Proton acceptor" evidence="1">
    <location>
        <position position="175"/>
    </location>
</feature>
<feature type="binding site" evidence="1">
    <location>
        <position position="157"/>
    </location>
    <ligand>
        <name>NAD(+)</name>
        <dbReference type="ChEBI" id="CHEBI:57540"/>
    </ligand>
</feature>
<feature type="binding site" evidence="1">
    <location>
        <position position="246"/>
    </location>
    <ligand>
        <name>a divalent metal cation</name>
        <dbReference type="ChEBI" id="CHEBI:60240"/>
    </ligand>
</feature>
<feature type="binding site" evidence="1">
    <location>
        <position position="247"/>
    </location>
    <ligand>
        <name>a divalent metal cation</name>
        <dbReference type="ChEBI" id="CHEBI:60240"/>
    </ligand>
</feature>
<feature type="binding site" evidence="1">
    <location>
        <position position="270"/>
    </location>
    <ligand>
        <name>a divalent metal cation</name>
        <dbReference type="ChEBI" id="CHEBI:60240"/>
    </ligand>
</feature>
<feature type="binding site" evidence="1">
    <location>
        <position position="270"/>
    </location>
    <ligand>
        <name>NAD(+)</name>
        <dbReference type="ChEBI" id="CHEBI:57540"/>
    </ligand>
</feature>
<feature type="binding site" evidence="1">
    <location>
        <position position="418"/>
    </location>
    <ligand>
        <name>NAD(+)</name>
        <dbReference type="ChEBI" id="CHEBI:57540"/>
    </ligand>
</feature>
<feature type="site" description="Important for activity" evidence="1">
    <location>
        <position position="270"/>
    </location>
</feature>
<organism>
    <name type="scientific">Erwinia tasmaniensis (strain DSM 17950 / CFBP 7177 / CIP 109463 / NCPPB 4357 / Et1/99)</name>
    <dbReference type="NCBI Taxonomy" id="465817"/>
    <lineage>
        <taxon>Bacteria</taxon>
        <taxon>Pseudomonadati</taxon>
        <taxon>Pseudomonadota</taxon>
        <taxon>Gammaproteobacteria</taxon>
        <taxon>Enterobacterales</taxon>
        <taxon>Erwiniaceae</taxon>
        <taxon>Erwinia</taxon>
    </lineage>
</organism>
<proteinExistence type="inferred from homology"/>
<protein>
    <recommendedName>
        <fullName evidence="1">NAD-dependent malic enzyme</fullName>
        <shortName evidence="1">NAD-ME</shortName>
        <ecNumber evidence="1">1.1.1.38</ecNumber>
    </recommendedName>
</protein>